<feature type="chain" id="PRO_1000023851" description="Hydrogenase maturation factor HypA">
    <location>
        <begin position="1"/>
        <end position="113"/>
    </location>
</feature>
<feature type="binding site" evidence="1">
    <location>
        <position position="2"/>
    </location>
    <ligand>
        <name>Ni(2+)</name>
        <dbReference type="ChEBI" id="CHEBI:49786"/>
    </ligand>
</feature>
<feature type="binding site" evidence="1">
    <location>
        <position position="73"/>
    </location>
    <ligand>
        <name>Zn(2+)</name>
        <dbReference type="ChEBI" id="CHEBI:29105"/>
    </ligand>
</feature>
<feature type="binding site" evidence="1">
    <location>
        <position position="76"/>
    </location>
    <ligand>
        <name>Zn(2+)</name>
        <dbReference type="ChEBI" id="CHEBI:29105"/>
    </ligand>
</feature>
<feature type="binding site" evidence="1">
    <location>
        <position position="89"/>
    </location>
    <ligand>
        <name>Zn(2+)</name>
        <dbReference type="ChEBI" id="CHEBI:29105"/>
    </ligand>
</feature>
<feature type="binding site" evidence="1">
    <location>
        <position position="92"/>
    </location>
    <ligand>
        <name>Zn(2+)</name>
        <dbReference type="ChEBI" id="CHEBI:29105"/>
    </ligand>
</feature>
<organism>
    <name type="scientific">Albidiferax ferrireducens (strain ATCC BAA-621 / DSM 15236 / T118)</name>
    <name type="common">Rhodoferax ferrireducens</name>
    <dbReference type="NCBI Taxonomy" id="338969"/>
    <lineage>
        <taxon>Bacteria</taxon>
        <taxon>Pseudomonadati</taxon>
        <taxon>Pseudomonadota</taxon>
        <taxon>Betaproteobacteria</taxon>
        <taxon>Burkholderiales</taxon>
        <taxon>Comamonadaceae</taxon>
        <taxon>Rhodoferax</taxon>
    </lineage>
</organism>
<keyword id="KW-0479">Metal-binding</keyword>
<keyword id="KW-0533">Nickel</keyword>
<keyword id="KW-1185">Reference proteome</keyword>
<keyword id="KW-0862">Zinc</keyword>
<comment type="function">
    <text evidence="1">Involved in the maturation of [NiFe] hydrogenases. Required for nickel insertion into the metal center of the hydrogenase.</text>
</comment>
<comment type="similarity">
    <text evidence="1">Belongs to the HypA/HybF family.</text>
</comment>
<gene>
    <name evidence="1" type="primary">hypA</name>
    <name type="ordered locus">Rfer_4095</name>
</gene>
<protein>
    <recommendedName>
        <fullName evidence="1">Hydrogenase maturation factor HypA</fullName>
    </recommendedName>
</protein>
<reference key="1">
    <citation type="submission" date="2006-02" db="EMBL/GenBank/DDBJ databases">
        <title>Complete sequence of chromosome of Rhodoferax ferrireducens DSM 15236.</title>
        <authorList>
            <person name="Copeland A."/>
            <person name="Lucas S."/>
            <person name="Lapidus A."/>
            <person name="Barry K."/>
            <person name="Detter J.C."/>
            <person name="Glavina del Rio T."/>
            <person name="Hammon N."/>
            <person name="Israni S."/>
            <person name="Pitluck S."/>
            <person name="Brettin T."/>
            <person name="Bruce D."/>
            <person name="Han C."/>
            <person name="Tapia R."/>
            <person name="Gilna P."/>
            <person name="Kiss H."/>
            <person name="Schmutz J."/>
            <person name="Larimer F."/>
            <person name="Land M."/>
            <person name="Kyrpides N."/>
            <person name="Ivanova N."/>
            <person name="Richardson P."/>
        </authorList>
    </citation>
    <scope>NUCLEOTIDE SEQUENCE [LARGE SCALE GENOMIC DNA]</scope>
    <source>
        <strain>ATCC BAA-621 / DSM 15236 / T118</strain>
    </source>
</reference>
<proteinExistence type="inferred from homology"/>
<sequence length="113" mass="12325">MHEMSLAEGVLQLIEDAARKDHFAKVTTVWLEIGQLSGVEPEAMVFCFDAVTRDSVAQGARLEIMTLPGTAWCMACAETVPMAEVFGQCPQCGGYQLQVTGGTEMRVKELEVE</sequence>
<evidence type="ECO:0000255" key="1">
    <source>
        <dbReference type="HAMAP-Rule" id="MF_00213"/>
    </source>
</evidence>
<accession>Q21R10</accession>
<name>HYPA_ALBFT</name>
<dbReference type="EMBL" id="CP000267">
    <property type="protein sequence ID" value="ABD71793.1"/>
    <property type="molecule type" value="Genomic_DNA"/>
</dbReference>
<dbReference type="RefSeq" id="WP_011466355.1">
    <property type="nucleotide sequence ID" value="NC_007908.1"/>
</dbReference>
<dbReference type="SMR" id="Q21R10"/>
<dbReference type="STRING" id="338969.Rfer_4095"/>
<dbReference type="KEGG" id="rfr:Rfer_4095"/>
<dbReference type="eggNOG" id="COG0375">
    <property type="taxonomic scope" value="Bacteria"/>
</dbReference>
<dbReference type="HOGENOM" id="CLU_126929_0_0_4"/>
<dbReference type="OrthoDB" id="288014at2"/>
<dbReference type="Proteomes" id="UP000008332">
    <property type="component" value="Chromosome"/>
</dbReference>
<dbReference type="GO" id="GO:0016151">
    <property type="term" value="F:nickel cation binding"/>
    <property type="evidence" value="ECO:0007669"/>
    <property type="project" value="UniProtKB-UniRule"/>
</dbReference>
<dbReference type="GO" id="GO:0008270">
    <property type="term" value="F:zinc ion binding"/>
    <property type="evidence" value="ECO:0007669"/>
    <property type="project" value="UniProtKB-UniRule"/>
</dbReference>
<dbReference type="GO" id="GO:0051604">
    <property type="term" value="P:protein maturation"/>
    <property type="evidence" value="ECO:0007669"/>
    <property type="project" value="InterPro"/>
</dbReference>
<dbReference type="GO" id="GO:0036211">
    <property type="term" value="P:protein modification process"/>
    <property type="evidence" value="ECO:0007669"/>
    <property type="project" value="UniProtKB-UniRule"/>
</dbReference>
<dbReference type="FunFam" id="3.30.2320.80:FF:000001">
    <property type="entry name" value="Hydrogenase maturation factor HypA"/>
    <property type="match status" value="1"/>
</dbReference>
<dbReference type="Gene3D" id="3.30.2320.80">
    <property type="match status" value="1"/>
</dbReference>
<dbReference type="HAMAP" id="MF_00213">
    <property type="entry name" value="HypA_HybF"/>
    <property type="match status" value="1"/>
</dbReference>
<dbReference type="InterPro" id="IPR020538">
    <property type="entry name" value="Hydgase_Ni_incorp_HypA/HybF_CS"/>
</dbReference>
<dbReference type="InterPro" id="IPR000688">
    <property type="entry name" value="HypA/HybF"/>
</dbReference>
<dbReference type="NCBIfam" id="TIGR00100">
    <property type="entry name" value="hypA"/>
    <property type="match status" value="1"/>
</dbReference>
<dbReference type="PANTHER" id="PTHR34535">
    <property type="entry name" value="HYDROGENASE MATURATION FACTOR HYPA"/>
    <property type="match status" value="1"/>
</dbReference>
<dbReference type="PANTHER" id="PTHR34535:SF3">
    <property type="entry name" value="HYDROGENASE MATURATION FACTOR HYPA"/>
    <property type="match status" value="1"/>
</dbReference>
<dbReference type="Pfam" id="PF01155">
    <property type="entry name" value="HypA"/>
    <property type="match status" value="1"/>
</dbReference>
<dbReference type="PIRSF" id="PIRSF004761">
    <property type="entry name" value="Hydrgn_mat_HypA"/>
    <property type="match status" value="1"/>
</dbReference>
<dbReference type="PROSITE" id="PS01249">
    <property type="entry name" value="HYPA"/>
    <property type="match status" value="1"/>
</dbReference>